<protein>
    <recommendedName>
        <fullName evidence="1">Small ribosomal subunit protein uS8</fullName>
    </recommendedName>
    <alternativeName>
        <fullName evidence="2">30S ribosomal protein S8</fullName>
    </alternativeName>
</protein>
<comment type="function">
    <text evidence="1">One of the primary rRNA binding proteins, it binds directly to 16S rRNA central domain where it helps coordinate assembly of the platform of the 30S subunit.</text>
</comment>
<comment type="subunit">
    <text evidence="1">Part of the 30S ribosomal subunit.</text>
</comment>
<comment type="similarity">
    <text evidence="1">Belongs to the universal ribosomal protein uS8 family.</text>
</comment>
<name>RS8_METVS</name>
<gene>
    <name evidence="1" type="primary">rps8</name>
    <name type="ordered locus">Mevan_0725</name>
</gene>
<organism>
    <name type="scientific">Methanococcus vannielii (strain ATCC 35089 / DSM 1224 / JCM 13029 / OCM 148 / SB)</name>
    <dbReference type="NCBI Taxonomy" id="406327"/>
    <lineage>
        <taxon>Archaea</taxon>
        <taxon>Methanobacteriati</taxon>
        <taxon>Methanobacteriota</taxon>
        <taxon>Methanomada group</taxon>
        <taxon>Methanococci</taxon>
        <taxon>Methanococcales</taxon>
        <taxon>Methanococcaceae</taxon>
        <taxon>Methanococcus</taxon>
    </lineage>
</organism>
<reference key="1">
    <citation type="submission" date="2007-06" db="EMBL/GenBank/DDBJ databases">
        <title>Complete sequence of Methanococcus vannielii SB.</title>
        <authorList>
            <consortium name="US DOE Joint Genome Institute"/>
            <person name="Copeland A."/>
            <person name="Lucas S."/>
            <person name="Lapidus A."/>
            <person name="Barry K."/>
            <person name="Glavina del Rio T."/>
            <person name="Dalin E."/>
            <person name="Tice H."/>
            <person name="Pitluck S."/>
            <person name="Chain P."/>
            <person name="Malfatti S."/>
            <person name="Shin M."/>
            <person name="Vergez L."/>
            <person name="Schmutz J."/>
            <person name="Larimer F."/>
            <person name="Land M."/>
            <person name="Hauser L."/>
            <person name="Kyrpides N."/>
            <person name="Anderson I."/>
            <person name="Sieprawska-Lupa M."/>
            <person name="Whitman W.B."/>
            <person name="Richardson P."/>
        </authorList>
    </citation>
    <scope>NUCLEOTIDE SEQUENCE [LARGE SCALE GENOMIC DNA]</scope>
    <source>
        <strain>ATCC 35089 / DSM 1224 / JCM 13029 / OCM 148 / SB</strain>
    </source>
</reference>
<evidence type="ECO:0000255" key="1">
    <source>
        <dbReference type="HAMAP-Rule" id="MF_01302"/>
    </source>
</evidence>
<evidence type="ECO:0000305" key="2"/>
<feature type="chain" id="PRO_1000051788" description="Small ribosomal subunit protein uS8">
    <location>
        <begin position="1"/>
        <end position="130"/>
    </location>
</feature>
<keyword id="KW-0687">Ribonucleoprotein</keyword>
<keyword id="KW-0689">Ribosomal protein</keyword>
<keyword id="KW-0694">RNA-binding</keyword>
<keyword id="KW-0699">rRNA-binding</keyword>
<accession>A6UQ59</accession>
<sequence length="130" mass="14335">MSLMDPLANALNHVSNCEGVGKNVAYLKPASKLIGRVLKVMQDQGYIGNFEYIEDGKAGVYKVDLIGQINKCGAVKPRYAVKYQEFEKFEKRYLPAKGFGLLIVSTPKGLMTHDEARTAGVGGRLISYVY</sequence>
<proteinExistence type="inferred from homology"/>
<dbReference type="EMBL" id="CP000742">
    <property type="protein sequence ID" value="ABR54631.1"/>
    <property type="molecule type" value="Genomic_DNA"/>
</dbReference>
<dbReference type="RefSeq" id="WP_011972533.1">
    <property type="nucleotide sequence ID" value="NC_009634.1"/>
</dbReference>
<dbReference type="SMR" id="A6UQ59"/>
<dbReference type="STRING" id="406327.Mevan_0725"/>
<dbReference type="GeneID" id="5326052"/>
<dbReference type="KEGG" id="mvn:Mevan_0725"/>
<dbReference type="eggNOG" id="arCOG04091">
    <property type="taxonomic scope" value="Archaea"/>
</dbReference>
<dbReference type="HOGENOM" id="CLU_098428_1_1_2"/>
<dbReference type="OrthoDB" id="5670at2157"/>
<dbReference type="Proteomes" id="UP000001107">
    <property type="component" value="Chromosome"/>
</dbReference>
<dbReference type="GO" id="GO:1990904">
    <property type="term" value="C:ribonucleoprotein complex"/>
    <property type="evidence" value="ECO:0007669"/>
    <property type="project" value="UniProtKB-KW"/>
</dbReference>
<dbReference type="GO" id="GO:0005840">
    <property type="term" value="C:ribosome"/>
    <property type="evidence" value="ECO:0007669"/>
    <property type="project" value="UniProtKB-KW"/>
</dbReference>
<dbReference type="GO" id="GO:0019843">
    <property type="term" value="F:rRNA binding"/>
    <property type="evidence" value="ECO:0007669"/>
    <property type="project" value="UniProtKB-UniRule"/>
</dbReference>
<dbReference type="GO" id="GO:0003735">
    <property type="term" value="F:structural constituent of ribosome"/>
    <property type="evidence" value="ECO:0007669"/>
    <property type="project" value="InterPro"/>
</dbReference>
<dbReference type="GO" id="GO:0006412">
    <property type="term" value="P:translation"/>
    <property type="evidence" value="ECO:0007669"/>
    <property type="project" value="UniProtKB-UniRule"/>
</dbReference>
<dbReference type="FunFam" id="3.30.1370.30:FF:000001">
    <property type="entry name" value="40S ribosomal protein S15a"/>
    <property type="match status" value="1"/>
</dbReference>
<dbReference type="Gene3D" id="3.30.1370.30">
    <property type="match status" value="1"/>
</dbReference>
<dbReference type="Gene3D" id="3.30.1490.10">
    <property type="match status" value="1"/>
</dbReference>
<dbReference type="HAMAP" id="MF_01302_A">
    <property type="entry name" value="Ribosomal_uS8_A"/>
    <property type="match status" value="1"/>
</dbReference>
<dbReference type="InterPro" id="IPR000630">
    <property type="entry name" value="Ribosomal_uS8"/>
</dbReference>
<dbReference type="InterPro" id="IPR047863">
    <property type="entry name" value="Ribosomal_uS8_CS"/>
</dbReference>
<dbReference type="InterPro" id="IPR035987">
    <property type="entry name" value="Ribosomal_uS8_sf"/>
</dbReference>
<dbReference type="NCBIfam" id="NF003115">
    <property type="entry name" value="PRK04034.1"/>
    <property type="match status" value="1"/>
</dbReference>
<dbReference type="PANTHER" id="PTHR11758">
    <property type="entry name" value="40S RIBOSOMAL PROTEIN S15A"/>
    <property type="match status" value="1"/>
</dbReference>
<dbReference type="Pfam" id="PF00410">
    <property type="entry name" value="Ribosomal_S8"/>
    <property type="match status" value="1"/>
</dbReference>
<dbReference type="SUPFAM" id="SSF56047">
    <property type="entry name" value="Ribosomal protein S8"/>
    <property type="match status" value="1"/>
</dbReference>
<dbReference type="PROSITE" id="PS00053">
    <property type="entry name" value="RIBOSOMAL_S8"/>
    <property type="match status" value="1"/>
</dbReference>